<protein>
    <recommendedName>
        <fullName>Altered inheritance of mitochondria protein 23, mitochondrial</fullName>
    </recommendedName>
</protein>
<feature type="transit peptide" description="Mitochondrion" evidence="2">
    <location>
        <begin position="1"/>
        <end position="12"/>
    </location>
</feature>
<feature type="chain" id="PRO_0000399528" description="Altered inheritance of mitochondria protein 23, mitochondrial">
    <location>
        <begin position="13"/>
        <end position="316"/>
    </location>
</feature>
<feature type="region of interest" description="Disordered" evidence="3">
    <location>
        <begin position="40"/>
        <end position="64"/>
    </location>
</feature>
<feature type="region of interest" description="Disordered" evidence="3">
    <location>
        <begin position="297"/>
        <end position="316"/>
    </location>
</feature>
<feature type="compositionally biased region" description="Basic and acidic residues" evidence="3">
    <location>
        <begin position="42"/>
        <end position="57"/>
    </location>
</feature>
<comment type="subcellular location">
    <subcellularLocation>
        <location evidence="1">Mitochondrion</location>
    </subcellularLocation>
</comment>
<comment type="similarity">
    <text evidence="4">Belongs to the AIM23 family.</text>
</comment>
<evidence type="ECO:0000250" key="1"/>
<evidence type="ECO:0000255" key="2"/>
<evidence type="ECO:0000256" key="3">
    <source>
        <dbReference type="SAM" id="MobiDB-lite"/>
    </source>
</evidence>
<evidence type="ECO:0000305" key="4"/>
<sequence>MFRRIVAVPSSWSSLQLFSTSAVRSSNGLAAILEQVSAKKSAPREAKTPSKYADRKPQHSSPVRKKKVFVRWTTGSEKAREIANTVVSEVLSIRSDGRLRLILPEENRIQELSMQDVARQLDLEVHSLRFIKSETDAGGRPLPLVKRVSVREAFRVHAERMAAEREKELLRKGVSARRVGAKERRAPDSKQVRISWQISPTDFSNQKSKEIRGHLERGHTVLVLLANKDASGPAPQVSPRELQRRSSLLDELAAILEDINCSVVRSGDPASRVELKLVPKAPQEVDRHALKEQRRLQRAEKLKRRLERRGPASAQE</sequence>
<accession>Q75BK9</accession>
<reference key="1">
    <citation type="journal article" date="2004" name="Science">
        <title>The Ashbya gossypii genome as a tool for mapping the ancient Saccharomyces cerevisiae genome.</title>
        <authorList>
            <person name="Dietrich F.S."/>
            <person name="Voegeli S."/>
            <person name="Brachat S."/>
            <person name="Lerch A."/>
            <person name="Gates K."/>
            <person name="Steiner S."/>
            <person name="Mohr C."/>
            <person name="Poehlmann R."/>
            <person name="Luedi P."/>
            <person name="Choi S."/>
            <person name="Wing R.A."/>
            <person name="Flavier A."/>
            <person name="Gaffney T.D."/>
            <person name="Philippsen P."/>
        </authorList>
    </citation>
    <scope>NUCLEOTIDE SEQUENCE [LARGE SCALE GENOMIC DNA]</scope>
    <source>
        <strain>ATCC 10895 / CBS 109.51 / FGSC 9923 / NRRL Y-1056</strain>
    </source>
</reference>
<reference key="2">
    <citation type="journal article" date="2013" name="G3 (Bethesda)">
        <title>Genomes of Ashbya fungi isolated from insects reveal four mating-type loci, numerous translocations, lack of transposons, and distinct gene duplications.</title>
        <authorList>
            <person name="Dietrich F.S."/>
            <person name="Voegeli S."/>
            <person name="Kuo S."/>
            <person name="Philippsen P."/>
        </authorList>
    </citation>
    <scope>GENOME REANNOTATION</scope>
    <source>
        <strain>ATCC 10895 / CBS 109.51 / FGSC 9923 / NRRL Y-1056</strain>
    </source>
</reference>
<name>AIM23_EREGS</name>
<proteinExistence type="inferred from homology"/>
<gene>
    <name type="primary">AIM23</name>
    <name type="ordered locus">ACR262C</name>
</gene>
<keyword id="KW-0496">Mitochondrion</keyword>
<keyword id="KW-1185">Reference proteome</keyword>
<keyword id="KW-0809">Transit peptide</keyword>
<organism>
    <name type="scientific">Eremothecium gossypii (strain ATCC 10895 / CBS 109.51 / FGSC 9923 / NRRL Y-1056)</name>
    <name type="common">Yeast</name>
    <name type="synonym">Ashbya gossypii</name>
    <dbReference type="NCBI Taxonomy" id="284811"/>
    <lineage>
        <taxon>Eukaryota</taxon>
        <taxon>Fungi</taxon>
        <taxon>Dikarya</taxon>
        <taxon>Ascomycota</taxon>
        <taxon>Saccharomycotina</taxon>
        <taxon>Saccharomycetes</taxon>
        <taxon>Saccharomycetales</taxon>
        <taxon>Saccharomycetaceae</taxon>
        <taxon>Eremothecium</taxon>
    </lineage>
</organism>
<dbReference type="EMBL" id="AE016816">
    <property type="protein sequence ID" value="AAS51488.1"/>
    <property type="molecule type" value="Genomic_DNA"/>
</dbReference>
<dbReference type="RefSeq" id="NP_983664.1">
    <property type="nucleotide sequence ID" value="NM_209017.1"/>
</dbReference>
<dbReference type="SMR" id="Q75BK9"/>
<dbReference type="FunCoup" id="Q75BK9">
    <property type="interactions" value="43"/>
</dbReference>
<dbReference type="EnsemblFungi" id="AAS51488">
    <property type="protein sequence ID" value="AAS51488"/>
    <property type="gene ID" value="AGOS_ACR262C"/>
</dbReference>
<dbReference type="GeneID" id="4619799"/>
<dbReference type="KEGG" id="ago:AGOS_ACR262C"/>
<dbReference type="eggNOG" id="ENOG502SSIU">
    <property type="taxonomic scope" value="Eukaryota"/>
</dbReference>
<dbReference type="HOGENOM" id="CLU_057910_0_0_1"/>
<dbReference type="InParanoid" id="Q75BK9"/>
<dbReference type="OMA" id="KVSWQIS"/>
<dbReference type="OrthoDB" id="3996489at2759"/>
<dbReference type="Proteomes" id="UP000000591">
    <property type="component" value="Chromosome III"/>
</dbReference>
<dbReference type="GO" id="GO:0005739">
    <property type="term" value="C:mitochondrion"/>
    <property type="evidence" value="ECO:0007669"/>
    <property type="project" value="UniProtKB-SubCell"/>
</dbReference>
<dbReference type="InterPro" id="IPR029427">
    <property type="entry name" value="AIM23"/>
</dbReference>
<dbReference type="Pfam" id="PF14877">
    <property type="entry name" value="mIF3"/>
    <property type="match status" value="1"/>
</dbReference>